<name>IF12_CUPMC</name>
<dbReference type="EMBL" id="CP000352">
    <property type="protein sequence ID" value="ABF10168.1"/>
    <property type="molecule type" value="Genomic_DNA"/>
</dbReference>
<dbReference type="SMR" id="Q1LI58"/>
<dbReference type="STRING" id="266264.Rmet_3296"/>
<dbReference type="KEGG" id="rme:Rmet_3296"/>
<dbReference type="eggNOG" id="COG0361">
    <property type="taxonomic scope" value="Bacteria"/>
</dbReference>
<dbReference type="HOGENOM" id="CLU_151267_1_0_4"/>
<dbReference type="Proteomes" id="UP000002429">
    <property type="component" value="Chromosome"/>
</dbReference>
<dbReference type="GO" id="GO:0005829">
    <property type="term" value="C:cytosol"/>
    <property type="evidence" value="ECO:0007669"/>
    <property type="project" value="TreeGrafter"/>
</dbReference>
<dbReference type="GO" id="GO:0043022">
    <property type="term" value="F:ribosome binding"/>
    <property type="evidence" value="ECO:0007669"/>
    <property type="project" value="UniProtKB-UniRule"/>
</dbReference>
<dbReference type="GO" id="GO:0019843">
    <property type="term" value="F:rRNA binding"/>
    <property type="evidence" value="ECO:0007669"/>
    <property type="project" value="UniProtKB-UniRule"/>
</dbReference>
<dbReference type="GO" id="GO:0003743">
    <property type="term" value="F:translation initiation factor activity"/>
    <property type="evidence" value="ECO:0007669"/>
    <property type="project" value="UniProtKB-UniRule"/>
</dbReference>
<dbReference type="CDD" id="cd04451">
    <property type="entry name" value="S1_IF1"/>
    <property type="match status" value="1"/>
</dbReference>
<dbReference type="FunFam" id="2.40.50.140:FF:000002">
    <property type="entry name" value="Translation initiation factor IF-1"/>
    <property type="match status" value="1"/>
</dbReference>
<dbReference type="Gene3D" id="2.40.50.140">
    <property type="entry name" value="Nucleic acid-binding proteins"/>
    <property type="match status" value="1"/>
</dbReference>
<dbReference type="HAMAP" id="MF_00075">
    <property type="entry name" value="IF_1"/>
    <property type="match status" value="1"/>
</dbReference>
<dbReference type="InterPro" id="IPR012340">
    <property type="entry name" value="NA-bd_OB-fold"/>
</dbReference>
<dbReference type="InterPro" id="IPR006196">
    <property type="entry name" value="RNA-binding_domain_S1_IF1"/>
</dbReference>
<dbReference type="InterPro" id="IPR003029">
    <property type="entry name" value="S1_domain"/>
</dbReference>
<dbReference type="InterPro" id="IPR004368">
    <property type="entry name" value="TIF_IF1"/>
</dbReference>
<dbReference type="NCBIfam" id="TIGR00008">
    <property type="entry name" value="infA"/>
    <property type="match status" value="1"/>
</dbReference>
<dbReference type="PANTHER" id="PTHR33370">
    <property type="entry name" value="TRANSLATION INITIATION FACTOR IF-1, CHLOROPLASTIC"/>
    <property type="match status" value="1"/>
</dbReference>
<dbReference type="PANTHER" id="PTHR33370:SF1">
    <property type="entry name" value="TRANSLATION INITIATION FACTOR IF-1, CHLOROPLASTIC"/>
    <property type="match status" value="1"/>
</dbReference>
<dbReference type="Pfam" id="PF01176">
    <property type="entry name" value="eIF-1a"/>
    <property type="match status" value="1"/>
</dbReference>
<dbReference type="SMART" id="SM00316">
    <property type="entry name" value="S1"/>
    <property type="match status" value="1"/>
</dbReference>
<dbReference type="SUPFAM" id="SSF50249">
    <property type="entry name" value="Nucleic acid-binding proteins"/>
    <property type="match status" value="1"/>
</dbReference>
<dbReference type="PROSITE" id="PS50832">
    <property type="entry name" value="S1_IF1_TYPE"/>
    <property type="match status" value="1"/>
</dbReference>
<sequence length="72" mass="8239">MAKDDVIQMQGEVLENLPNATFRVKLENGHIVLGHISGKMRMNYIRILPGDKVTVELTPYDLSRARIVFRTK</sequence>
<feature type="chain" id="PRO_0000263850" description="Translation initiation factor IF-1 2">
    <location>
        <begin position="1"/>
        <end position="72"/>
    </location>
</feature>
<feature type="domain" description="S1-like" evidence="1">
    <location>
        <begin position="1"/>
        <end position="72"/>
    </location>
</feature>
<proteinExistence type="inferred from homology"/>
<keyword id="KW-0963">Cytoplasm</keyword>
<keyword id="KW-0396">Initiation factor</keyword>
<keyword id="KW-0648">Protein biosynthesis</keyword>
<keyword id="KW-1185">Reference proteome</keyword>
<keyword id="KW-0694">RNA-binding</keyword>
<keyword id="KW-0699">rRNA-binding</keyword>
<accession>Q1LI58</accession>
<protein>
    <recommendedName>
        <fullName evidence="1">Translation initiation factor IF-1 2</fullName>
    </recommendedName>
</protein>
<organism>
    <name type="scientific">Cupriavidus metallidurans (strain ATCC 43123 / DSM 2839 / NBRC 102507 / CH34)</name>
    <name type="common">Ralstonia metallidurans</name>
    <dbReference type="NCBI Taxonomy" id="266264"/>
    <lineage>
        <taxon>Bacteria</taxon>
        <taxon>Pseudomonadati</taxon>
        <taxon>Pseudomonadota</taxon>
        <taxon>Betaproteobacteria</taxon>
        <taxon>Burkholderiales</taxon>
        <taxon>Burkholderiaceae</taxon>
        <taxon>Cupriavidus</taxon>
    </lineage>
</organism>
<gene>
    <name evidence="1" type="primary">infA2</name>
    <name type="ordered locus">Rmet_3296</name>
</gene>
<comment type="function">
    <text evidence="1">One of the essential components for the initiation of protein synthesis. Stabilizes the binding of IF-2 and IF-3 on the 30S subunit to which N-formylmethionyl-tRNA(fMet) subsequently binds. Helps modulate mRNA selection, yielding the 30S pre-initiation complex (PIC). Upon addition of the 50S ribosomal subunit IF-1, IF-2 and IF-3 are released leaving the mature 70S translation initiation complex.</text>
</comment>
<comment type="subunit">
    <text evidence="1">Component of the 30S ribosomal translation pre-initiation complex which assembles on the 30S ribosome in the order IF-2 and IF-3, IF-1 and N-formylmethionyl-tRNA(fMet); mRNA recruitment can occur at any time during PIC assembly.</text>
</comment>
<comment type="subcellular location">
    <subcellularLocation>
        <location evidence="1">Cytoplasm</location>
    </subcellularLocation>
</comment>
<comment type="similarity">
    <text evidence="1">Belongs to the IF-1 family.</text>
</comment>
<evidence type="ECO:0000255" key="1">
    <source>
        <dbReference type="HAMAP-Rule" id="MF_00075"/>
    </source>
</evidence>
<reference key="1">
    <citation type="journal article" date="2010" name="PLoS ONE">
        <title>The complete genome sequence of Cupriavidus metallidurans strain CH34, a master survivalist in harsh and anthropogenic environments.</title>
        <authorList>
            <person name="Janssen P.J."/>
            <person name="Van Houdt R."/>
            <person name="Moors H."/>
            <person name="Monsieurs P."/>
            <person name="Morin N."/>
            <person name="Michaux A."/>
            <person name="Benotmane M.A."/>
            <person name="Leys N."/>
            <person name="Vallaeys T."/>
            <person name="Lapidus A."/>
            <person name="Monchy S."/>
            <person name="Medigue C."/>
            <person name="Taghavi S."/>
            <person name="McCorkle S."/>
            <person name="Dunn J."/>
            <person name="van der Lelie D."/>
            <person name="Mergeay M."/>
        </authorList>
    </citation>
    <scope>NUCLEOTIDE SEQUENCE [LARGE SCALE GENOMIC DNA]</scope>
    <source>
        <strain>ATCC 43123 / DSM 2839 / NBRC 102507 / CH34</strain>
    </source>
</reference>